<dbReference type="EMBL" id="L11244">
    <property type="protein sequence ID" value="AAA35615.1"/>
    <property type="molecule type" value="mRNA"/>
</dbReference>
<dbReference type="EMBL" id="L11245">
    <property type="protein sequence ID" value="AAA35616.1"/>
    <property type="molecule type" value="mRNA"/>
</dbReference>
<dbReference type="EMBL" id="M29964">
    <property type="protein sequence ID" value="AAB59520.1"/>
    <property type="molecule type" value="mRNA"/>
</dbReference>
<dbReference type="EMBL" id="EF613556">
    <property type="protein sequence ID" value="ABQ52216.1"/>
    <property type="molecule type" value="Genomic_DNA"/>
</dbReference>
<dbReference type="EMBL" id="AL445493">
    <property type="status" value="NOT_ANNOTATED_CDS"/>
    <property type="molecule type" value="Genomic_DNA"/>
</dbReference>
<dbReference type="EMBL" id="CH471100">
    <property type="protein sequence ID" value="EAW93504.1"/>
    <property type="molecule type" value="Genomic_DNA"/>
</dbReference>
<dbReference type="EMBL" id="CH471100">
    <property type="protein sequence ID" value="EAW93506.1"/>
    <property type="molecule type" value="Genomic_DNA"/>
</dbReference>
<dbReference type="EMBL" id="BC005378">
    <property type="protein sequence ID" value="AAH05378.1"/>
    <property type="molecule type" value="mRNA"/>
</dbReference>
<dbReference type="CCDS" id="CCDS1476.1">
    <molecule id="P20851-1"/>
</dbReference>
<dbReference type="CCDS" id="CCDS31005.1">
    <molecule id="P20851-2"/>
</dbReference>
<dbReference type="PIR" id="A47107">
    <property type="entry name" value="A34877"/>
</dbReference>
<dbReference type="RefSeq" id="NP_000707.1">
    <molecule id="P20851-1"/>
    <property type="nucleotide sequence ID" value="NM_000716.3"/>
</dbReference>
<dbReference type="RefSeq" id="NP_001017364.1">
    <molecule id="P20851-2"/>
    <property type="nucleotide sequence ID" value="NM_001017364.1"/>
</dbReference>
<dbReference type="RefSeq" id="NP_001017365.1">
    <molecule id="P20851-1"/>
    <property type="nucleotide sequence ID" value="NM_001017365.3"/>
</dbReference>
<dbReference type="RefSeq" id="NP_001017366.1">
    <molecule id="P20851-2"/>
    <property type="nucleotide sequence ID" value="NM_001017366.3"/>
</dbReference>
<dbReference type="RefSeq" id="NP_001017367.1">
    <molecule id="P20851-1"/>
    <property type="nucleotide sequence ID" value="NM_001017367.1"/>
</dbReference>
<dbReference type="RefSeq" id="XP_005273311.1">
    <molecule id="P20851-1"/>
    <property type="nucleotide sequence ID" value="XM_005273254.6"/>
</dbReference>
<dbReference type="RefSeq" id="XP_024305232.1">
    <molecule id="P20851-2"/>
    <property type="nucleotide sequence ID" value="XM_024449464.2"/>
</dbReference>
<dbReference type="RefSeq" id="XP_047285591.1">
    <molecule id="P20851-2"/>
    <property type="nucleotide sequence ID" value="XM_047429635.1"/>
</dbReference>
<dbReference type="RefSeq" id="XP_054194558.1">
    <molecule id="P20851-1"/>
    <property type="nucleotide sequence ID" value="XM_054338583.1"/>
</dbReference>
<dbReference type="RefSeq" id="XP_054194559.1">
    <molecule id="P20851-2"/>
    <property type="nucleotide sequence ID" value="XM_054338584.1"/>
</dbReference>
<dbReference type="RefSeq" id="XP_054194560.1">
    <molecule id="P20851-2"/>
    <property type="nucleotide sequence ID" value="XM_054338585.1"/>
</dbReference>
<dbReference type="SMR" id="P20851"/>
<dbReference type="BioGRID" id="107186">
    <property type="interactions" value="37"/>
</dbReference>
<dbReference type="FunCoup" id="P20851">
    <property type="interactions" value="166"/>
</dbReference>
<dbReference type="IntAct" id="P20851">
    <property type="interactions" value="24"/>
</dbReference>
<dbReference type="STRING" id="9606.ENSP00000243611"/>
<dbReference type="DrugBank" id="DB01593">
    <property type="generic name" value="Zinc"/>
</dbReference>
<dbReference type="DrugBank" id="DB14487">
    <property type="generic name" value="Zinc acetate"/>
</dbReference>
<dbReference type="DrugBank" id="DB14533">
    <property type="generic name" value="Zinc chloride"/>
</dbReference>
<dbReference type="DrugBank" id="DB14548">
    <property type="generic name" value="Zinc sulfate, unspecified form"/>
</dbReference>
<dbReference type="GlyConnect" id="1052">
    <property type="glycosylation" value="8 N-Linked glycans (5 sites)"/>
</dbReference>
<dbReference type="GlyCosmos" id="P20851">
    <property type="glycosylation" value="7 sites, 11 glycans"/>
</dbReference>
<dbReference type="GlyGen" id="P20851">
    <property type="glycosylation" value="8 sites, 39 N-linked glycans (5 sites), 2 O-linked glycans (2 sites)"/>
</dbReference>
<dbReference type="iPTMnet" id="P20851"/>
<dbReference type="PhosphoSitePlus" id="P20851"/>
<dbReference type="BioMuta" id="C4BPB"/>
<dbReference type="DMDM" id="115213"/>
<dbReference type="jPOST" id="P20851"/>
<dbReference type="MassIVE" id="P20851"/>
<dbReference type="PaxDb" id="9606-ENSP00000243611"/>
<dbReference type="PeptideAtlas" id="P20851"/>
<dbReference type="ProteomicsDB" id="53819">
    <molecule id="P20851-1"/>
</dbReference>
<dbReference type="ProteomicsDB" id="53820">
    <molecule id="P20851-2"/>
</dbReference>
<dbReference type="Antibodypedia" id="20697">
    <property type="antibodies" value="296 antibodies from 27 providers"/>
</dbReference>
<dbReference type="DNASU" id="725"/>
<dbReference type="Ensembl" id="ENST00000243611.9">
    <molecule id="P20851-1"/>
    <property type="protein sequence ID" value="ENSP00000243611.5"/>
    <property type="gene ID" value="ENSG00000123843.13"/>
</dbReference>
<dbReference type="Ensembl" id="ENST00000367076.7">
    <molecule id="P20851-2"/>
    <property type="protein sequence ID" value="ENSP00000356043.3"/>
    <property type="gene ID" value="ENSG00000123843.13"/>
</dbReference>
<dbReference type="Ensembl" id="ENST00000367078.8">
    <molecule id="P20851-1"/>
    <property type="protein sequence ID" value="ENSP00000356045.3"/>
    <property type="gene ID" value="ENSG00000123843.13"/>
</dbReference>
<dbReference type="Ensembl" id="ENST00000391923.1">
    <molecule id="P20851-1"/>
    <property type="protein sequence ID" value="ENSP00000375790.1"/>
    <property type="gene ID" value="ENSG00000123843.13"/>
</dbReference>
<dbReference type="GeneID" id="725"/>
<dbReference type="KEGG" id="hsa:725"/>
<dbReference type="MANE-Select" id="ENST00000367078.8">
    <property type="protein sequence ID" value="ENSP00000356045.3"/>
    <property type="RefSeq nucleotide sequence ID" value="NM_001017365.3"/>
    <property type="RefSeq protein sequence ID" value="NP_001017365.1"/>
</dbReference>
<dbReference type="UCSC" id="uc001hfj.4">
    <molecule id="P20851-1"/>
    <property type="organism name" value="human"/>
</dbReference>
<dbReference type="AGR" id="HGNC:1328"/>
<dbReference type="CTD" id="725"/>
<dbReference type="DisGeNET" id="725"/>
<dbReference type="GeneCards" id="C4BPB"/>
<dbReference type="HGNC" id="HGNC:1328">
    <property type="gene designation" value="C4BPB"/>
</dbReference>
<dbReference type="HPA" id="ENSG00000123843">
    <property type="expression patterns" value="Tissue enriched (liver)"/>
</dbReference>
<dbReference type="MalaCards" id="C4BPB"/>
<dbReference type="MIM" id="120831">
    <property type="type" value="gene"/>
</dbReference>
<dbReference type="neXtProt" id="NX_P20851"/>
<dbReference type="OpenTargets" id="ENSG00000123843"/>
<dbReference type="PharmGKB" id="PA25908"/>
<dbReference type="VEuPathDB" id="HostDB:ENSG00000123843"/>
<dbReference type="eggNOG" id="KOG4297">
    <property type="taxonomic scope" value="Eukaryota"/>
</dbReference>
<dbReference type="GeneTree" id="ENSGT00940000163065"/>
<dbReference type="HOGENOM" id="CLU_093877_0_0_1"/>
<dbReference type="InParanoid" id="P20851"/>
<dbReference type="OMA" id="ICIKGYH"/>
<dbReference type="OrthoDB" id="6480633at2759"/>
<dbReference type="PAN-GO" id="P20851">
    <property type="GO annotations" value="2 GO annotations based on evolutionary models"/>
</dbReference>
<dbReference type="PhylomeDB" id="P20851"/>
<dbReference type="TreeFam" id="TF342864"/>
<dbReference type="PathwayCommons" id="P20851"/>
<dbReference type="Reactome" id="R-HSA-977606">
    <property type="pathway name" value="Regulation of Complement cascade"/>
</dbReference>
<dbReference type="SignaLink" id="P20851"/>
<dbReference type="BioGRID-ORCS" id="725">
    <property type="hits" value="10 hits in 1147 CRISPR screens"/>
</dbReference>
<dbReference type="GenomeRNAi" id="725"/>
<dbReference type="Pharos" id="P20851">
    <property type="development level" value="Tbio"/>
</dbReference>
<dbReference type="PRO" id="PR:P20851"/>
<dbReference type="Proteomes" id="UP000005640">
    <property type="component" value="Chromosome 1"/>
</dbReference>
<dbReference type="RNAct" id="P20851">
    <property type="molecule type" value="protein"/>
</dbReference>
<dbReference type="Bgee" id="ENSG00000123843">
    <property type="expression patterns" value="Expressed in right lobe of liver and 115 other cell types or tissues"/>
</dbReference>
<dbReference type="ExpressionAtlas" id="P20851">
    <property type="expression patterns" value="baseline and differential"/>
</dbReference>
<dbReference type="GO" id="GO:0005576">
    <property type="term" value="C:extracellular region"/>
    <property type="evidence" value="ECO:0000303"/>
    <property type="project" value="UniProtKB"/>
</dbReference>
<dbReference type="GO" id="GO:0005615">
    <property type="term" value="C:extracellular space"/>
    <property type="evidence" value="ECO:0000314"/>
    <property type="project" value="BHF-UCL"/>
</dbReference>
<dbReference type="GO" id="GO:0005886">
    <property type="term" value="C:plasma membrane"/>
    <property type="evidence" value="ECO:0000304"/>
    <property type="project" value="Reactome"/>
</dbReference>
<dbReference type="GO" id="GO:0007596">
    <property type="term" value="P:blood coagulation"/>
    <property type="evidence" value="ECO:0000304"/>
    <property type="project" value="ProtInc"/>
</dbReference>
<dbReference type="GO" id="GO:0006958">
    <property type="term" value="P:complement activation, classical pathway"/>
    <property type="evidence" value="ECO:0007669"/>
    <property type="project" value="UniProtKB-KW"/>
</dbReference>
<dbReference type="GO" id="GO:0045087">
    <property type="term" value="P:innate immune response"/>
    <property type="evidence" value="ECO:0007669"/>
    <property type="project" value="UniProtKB-KW"/>
</dbReference>
<dbReference type="GO" id="GO:0045959">
    <property type="term" value="P:negative regulation of complement activation, classical pathway"/>
    <property type="evidence" value="ECO:0000314"/>
    <property type="project" value="BHF-UCL"/>
</dbReference>
<dbReference type="GO" id="GO:0045732">
    <property type="term" value="P:positive regulation of protein catabolic process"/>
    <property type="evidence" value="ECO:0000314"/>
    <property type="project" value="BHF-UCL"/>
</dbReference>
<dbReference type="GO" id="GO:1903027">
    <property type="term" value="P:regulation of opsonization"/>
    <property type="evidence" value="ECO:0000314"/>
    <property type="project" value="BHF-UCL"/>
</dbReference>
<dbReference type="GO" id="GO:0009609">
    <property type="term" value="P:response to symbiotic bacterium"/>
    <property type="evidence" value="ECO:0000314"/>
    <property type="project" value="BHF-UCL"/>
</dbReference>
<dbReference type="CDD" id="cd00033">
    <property type="entry name" value="CCP"/>
    <property type="match status" value="3"/>
</dbReference>
<dbReference type="FunFam" id="2.10.70.10:FF:000090">
    <property type="entry name" value="Complement component 4 binding protein beta"/>
    <property type="match status" value="1"/>
</dbReference>
<dbReference type="FunFam" id="2.10.70.10:FF:000098">
    <property type="entry name" value="Complement component 4 binding protein beta"/>
    <property type="match status" value="1"/>
</dbReference>
<dbReference type="FunFam" id="2.10.70.10:FF:000104">
    <property type="entry name" value="Complement component 4 binding protein beta"/>
    <property type="match status" value="1"/>
</dbReference>
<dbReference type="Gene3D" id="2.10.70.10">
    <property type="entry name" value="Complement Module, domain 1"/>
    <property type="match status" value="3"/>
</dbReference>
<dbReference type="InterPro" id="IPR035976">
    <property type="entry name" value="Sushi/SCR/CCP_sf"/>
</dbReference>
<dbReference type="InterPro" id="IPR000436">
    <property type="entry name" value="Sushi_SCR_CCP_dom"/>
</dbReference>
<dbReference type="PANTHER" id="PTHR46393:SF7">
    <property type="entry name" value="COMPLEMENT C2"/>
    <property type="match status" value="1"/>
</dbReference>
<dbReference type="PANTHER" id="PTHR46393">
    <property type="entry name" value="SUSHI DOMAIN-CONTAINING PROTEIN"/>
    <property type="match status" value="1"/>
</dbReference>
<dbReference type="Pfam" id="PF00084">
    <property type="entry name" value="Sushi"/>
    <property type="match status" value="3"/>
</dbReference>
<dbReference type="SMART" id="SM00032">
    <property type="entry name" value="CCP"/>
    <property type="match status" value="3"/>
</dbReference>
<dbReference type="SUPFAM" id="SSF57535">
    <property type="entry name" value="Complement control module/SCR domain"/>
    <property type="match status" value="3"/>
</dbReference>
<dbReference type="PROSITE" id="PS50923">
    <property type="entry name" value="SUSHI"/>
    <property type="match status" value="3"/>
</dbReference>
<feature type="signal peptide">
    <location>
        <begin position="1"/>
        <end position="17"/>
    </location>
</feature>
<feature type="chain" id="PRO_0000005892" description="C4b-binding protein beta chain">
    <location>
        <begin position="18"/>
        <end position="252"/>
    </location>
</feature>
<feature type="domain" description="Sushi 1" evidence="2">
    <location>
        <begin position="21"/>
        <end position="78"/>
    </location>
</feature>
<feature type="domain" description="Sushi 2" evidence="2">
    <location>
        <begin position="79"/>
        <end position="136"/>
    </location>
</feature>
<feature type="domain" description="Sushi 3" evidence="2">
    <location>
        <begin position="137"/>
        <end position="193"/>
    </location>
</feature>
<feature type="glycosylation site" description="N-linked (GlcNAc...) asparagine" evidence="3 4">
    <location>
        <position position="64"/>
    </location>
</feature>
<feature type="glycosylation site" description="N-linked (GlcNAc...) asparagine" evidence="3">
    <location>
        <position position="71"/>
    </location>
</feature>
<feature type="glycosylation site" description="N-linked (GlcNAc...) asparagine" evidence="3 4 5">
    <location>
        <position position="98"/>
    </location>
</feature>
<feature type="glycosylation site" description="N-linked (GlcNAc...) asparagine" evidence="1">
    <location>
        <position position="117"/>
    </location>
</feature>
<feature type="glycosylation site" description="N-linked (GlcNAc...) asparagine" evidence="1">
    <location>
        <position position="154"/>
    </location>
</feature>
<feature type="disulfide bond" evidence="2">
    <location>
        <begin position="23"/>
        <end position="63"/>
    </location>
</feature>
<feature type="disulfide bond" evidence="2">
    <location>
        <begin position="49"/>
        <end position="76"/>
    </location>
</feature>
<feature type="disulfide bond" evidence="2">
    <location>
        <begin position="81"/>
        <end position="121"/>
    </location>
</feature>
<feature type="disulfide bond" evidence="2">
    <location>
        <begin position="107"/>
        <end position="134"/>
    </location>
</feature>
<feature type="disulfide bond" evidence="2">
    <location>
        <begin position="139"/>
        <end position="179"/>
    </location>
</feature>
<feature type="disulfide bond" evidence="2">
    <location>
        <begin position="165"/>
        <end position="191"/>
    </location>
</feature>
<feature type="disulfide bond" description="Interchain (with alpha chain)" evidence="2">
    <location>
        <position position="202"/>
    </location>
</feature>
<feature type="disulfide bond" description="Interchain (with alpha chain)" evidence="2">
    <location>
        <position position="216"/>
    </location>
</feature>
<feature type="splice variant" id="VSP_022594" description="In isoform 2." evidence="7">
    <location>
        <position position="20"/>
    </location>
</feature>
<feature type="sequence variant" id="VAR_038734" description="In dbSNP:rs56258224." evidence="6">
    <original>K</original>
    <variation>Q</variation>
    <location>
        <position position="102"/>
    </location>
</feature>
<feature type="sequence variant" id="VAR_012039" description="In dbSNP:rs1803226.">
    <original>P</original>
    <variation>S</variation>
    <location>
        <position position="198"/>
    </location>
</feature>
<gene>
    <name type="primary">C4BPB</name>
</gene>
<protein>
    <recommendedName>
        <fullName>C4b-binding protein beta chain</fullName>
    </recommendedName>
</protein>
<reference key="1">
    <citation type="journal article" date="1993" name="J. Biol. Chem.">
        <title>The human C4b-binding protein beta-chain gene.</title>
        <authorList>
            <person name="Hillarp A."/>
            <person name="Pardo-Manuel F."/>
            <person name="Ruiz R."/>
            <person name="de Cordoba S."/>
            <person name="Dahlback B."/>
        </authorList>
    </citation>
    <scope>NUCLEOTIDE SEQUENCE [MRNA] (ISOFORM 1)</scope>
</reference>
<reference key="2">
    <citation type="journal article" date="1990" name="Proc. Natl. Acad. Sci. U.S.A.">
        <title>Cloning of cDNA coding for the beta chain of human complement component C4b-binding protein: sequence homology with the alpha chain.</title>
        <authorList>
            <person name="Hillarp A."/>
            <person name="Dahlback B."/>
        </authorList>
    </citation>
    <scope>NUCLEOTIDE SEQUENCE [MRNA] (ISOFORM 1)</scope>
</reference>
<reference key="3">
    <citation type="submission" date="2007-05" db="EMBL/GenBank/DDBJ databases">
        <authorList>
            <consortium name="SeattleSNPs variation discovery resource"/>
        </authorList>
    </citation>
    <scope>NUCLEOTIDE SEQUENCE [GENOMIC DNA]</scope>
    <scope>VARIANT GLN-102</scope>
</reference>
<reference key="4">
    <citation type="journal article" date="2006" name="Nature">
        <title>The DNA sequence and biological annotation of human chromosome 1.</title>
        <authorList>
            <person name="Gregory S.G."/>
            <person name="Barlow K.F."/>
            <person name="McLay K.E."/>
            <person name="Kaul R."/>
            <person name="Swarbreck D."/>
            <person name="Dunham A."/>
            <person name="Scott C.E."/>
            <person name="Howe K.L."/>
            <person name="Woodfine K."/>
            <person name="Spencer C.C.A."/>
            <person name="Jones M.C."/>
            <person name="Gillson C."/>
            <person name="Searle S."/>
            <person name="Zhou Y."/>
            <person name="Kokocinski F."/>
            <person name="McDonald L."/>
            <person name="Evans R."/>
            <person name="Phillips K."/>
            <person name="Atkinson A."/>
            <person name="Cooper R."/>
            <person name="Jones C."/>
            <person name="Hall R.E."/>
            <person name="Andrews T.D."/>
            <person name="Lloyd C."/>
            <person name="Ainscough R."/>
            <person name="Almeida J.P."/>
            <person name="Ambrose K.D."/>
            <person name="Anderson F."/>
            <person name="Andrew R.W."/>
            <person name="Ashwell R.I.S."/>
            <person name="Aubin K."/>
            <person name="Babbage A.K."/>
            <person name="Bagguley C.L."/>
            <person name="Bailey J."/>
            <person name="Beasley H."/>
            <person name="Bethel G."/>
            <person name="Bird C.P."/>
            <person name="Bray-Allen S."/>
            <person name="Brown J.Y."/>
            <person name="Brown A.J."/>
            <person name="Buckley D."/>
            <person name="Burton J."/>
            <person name="Bye J."/>
            <person name="Carder C."/>
            <person name="Chapman J.C."/>
            <person name="Clark S.Y."/>
            <person name="Clarke G."/>
            <person name="Clee C."/>
            <person name="Cobley V."/>
            <person name="Collier R.E."/>
            <person name="Corby N."/>
            <person name="Coville G.J."/>
            <person name="Davies J."/>
            <person name="Deadman R."/>
            <person name="Dunn M."/>
            <person name="Earthrowl M."/>
            <person name="Ellington A.G."/>
            <person name="Errington H."/>
            <person name="Frankish A."/>
            <person name="Frankland J."/>
            <person name="French L."/>
            <person name="Garner P."/>
            <person name="Garnett J."/>
            <person name="Gay L."/>
            <person name="Ghori M.R.J."/>
            <person name="Gibson R."/>
            <person name="Gilby L.M."/>
            <person name="Gillett W."/>
            <person name="Glithero R.J."/>
            <person name="Grafham D.V."/>
            <person name="Griffiths C."/>
            <person name="Griffiths-Jones S."/>
            <person name="Grocock R."/>
            <person name="Hammond S."/>
            <person name="Harrison E.S.I."/>
            <person name="Hart E."/>
            <person name="Haugen E."/>
            <person name="Heath P.D."/>
            <person name="Holmes S."/>
            <person name="Holt K."/>
            <person name="Howden P.J."/>
            <person name="Hunt A.R."/>
            <person name="Hunt S.E."/>
            <person name="Hunter G."/>
            <person name="Isherwood J."/>
            <person name="James R."/>
            <person name="Johnson C."/>
            <person name="Johnson D."/>
            <person name="Joy A."/>
            <person name="Kay M."/>
            <person name="Kershaw J.K."/>
            <person name="Kibukawa M."/>
            <person name="Kimberley A.M."/>
            <person name="King A."/>
            <person name="Knights A.J."/>
            <person name="Lad H."/>
            <person name="Laird G."/>
            <person name="Lawlor S."/>
            <person name="Leongamornlert D.A."/>
            <person name="Lloyd D.M."/>
            <person name="Loveland J."/>
            <person name="Lovell J."/>
            <person name="Lush M.J."/>
            <person name="Lyne R."/>
            <person name="Martin S."/>
            <person name="Mashreghi-Mohammadi M."/>
            <person name="Matthews L."/>
            <person name="Matthews N.S.W."/>
            <person name="McLaren S."/>
            <person name="Milne S."/>
            <person name="Mistry S."/>
            <person name="Moore M.J.F."/>
            <person name="Nickerson T."/>
            <person name="O'Dell C.N."/>
            <person name="Oliver K."/>
            <person name="Palmeiri A."/>
            <person name="Palmer S.A."/>
            <person name="Parker A."/>
            <person name="Patel D."/>
            <person name="Pearce A.V."/>
            <person name="Peck A.I."/>
            <person name="Pelan S."/>
            <person name="Phelps K."/>
            <person name="Phillimore B.J."/>
            <person name="Plumb R."/>
            <person name="Rajan J."/>
            <person name="Raymond C."/>
            <person name="Rouse G."/>
            <person name="Saenphimmachak C."/>
            <person name="Sehra H.K."/>
            <person name="Sheridan E."/>
            <person name="Shownkeen R."/>
            <person name="Sims S."/>
            <person name="Skuce C.D."/>
            <person name="Smith M."/>
            <person name="Steward C."/>
            <person name="Subramanian S."/>
            <person name="Sycamore N."/>
            <person name="Tracey A."/>
            <person name="Tromans A."/>
            <person name="Van Helmond Z."/>
            <person name="Wall M."/>
            <person name="Wallis J.M."/>
            <person name="White S."/>
            <person name="Whitehead S.L."/>
            <person name="Wilkinson J.E."/>
            <person name="Willey D.L."/>
            <person name="Williams H."/>
            <person name="Wilming L."/>
            <person name="Wray P.W."/>
            <person name="Wu Z."/>
            <person name="Coulson A."/>
            <person name="Vaudin M."/>
            <person name="Sulston J.E."/>
            <person name="Durbin R.M."/>
            <person name="Hubbard T."/>
            <person name="Wooster R."/>
            <person name="Dunham I."/>
            <person name="Carter N.P."/>
            <person name="McVean G."/>
            <person name="Ross M.T."/>
            <person name="Harrow J."/>
            <person name="Olson M.V."/>
            <person name="Beck S."/>
            <person name="Rogers J."/>
            <person name="Bentley D.R."/>
        </authorList>
    </citation>
    <scope>NUCLEOTIDE SEQUENCE [LARGE SCALE GENOMIC DNA]</scope>
</reference>
<reference key="5">
    <citation type="submission" date="2005-09" db="EMBL/GenBank/DDBJ databases">
        <authorList>
            <person name="Mural R.J."/>
            <person name="Istrail S."/>
            <person name="Sutton G.G."/>
            <person name="Florea L."/>
            <person name="Halpern A.L."/>
            <person name="Mobarry C.M."/>
            <person name="Lippert R."/>
            <person name="Walenz B."/>
            <person name="Shatkay H."/>
            <person name="Dew I."/>
            <person name="Miller J.R."/>
            <person name="Flanigan M.J."/>
            <person name="Edwards N.J."/>
            <person name="Bolanos R."/>
            <person name="Fasulo D."/>
            <person name="Halldorsson B.V."/>
            <person name="Hannenhalli S."/>
            <person name="Turner R."/>
            <person name="Yooseph S."/>
            <person name="Lu F."/>
            <person name="Nusskern D.R."/>
            <person name="Shue B.C."/>
            <person name="Zheng X.H."/>
            <person name="Zhong F."/>
            <person name="Delcher A.L."/>
            <person name="Huson D.H."/>
            <person name="Kravitz S.A."/>
            <person name="Mouchard L."/>
            <person name="Reinert K."/>
            <person name="Remington K.A."/>
            <person name="Clark A.G."/>
            <person name="Waterman M.S."/>
            <person name="Eichler E.E."/>
            <person name="Adams M.D."/>
            <person name="Hunkapiller M.W."/>
            <person name="Myers E.W."/>
            <person name="Venter J.C."/>
        </authorList>
    </citation>
    <scope>NUCLEOTIDE SEQUENCE [LARGE SCALE GENOMIC DNA]</scope>
</reference>
<reference key="6">
    <citation type="journal article" date="2004" name="Genome Res.">
        <title>The status, quality, and expansion of the NIH full-length cDNA project: the Mammalian Gene Collection (MGC).</title>
        <authorList>
            <consortium name="The MGC Project Team"/>
        </authorList>
    </citation>
    <scope>NUCLEOTIDE SEQUENCE [LARGE SCALE MRNA] (ISOFORM 2)</scope>
    <source>
        <tissue>Skeletal muscle</tissue>
    </source>
</reference>
<reference key="7">
    <citation type="journal article" date="2004" name="Proteomics">
        <title>Screening for N-glycosylated proteins by liquid chromatography mass spectrometry.</title>
        <authorList>
            <person name="Bunkenborg J."/>
            <person name="Pilch B.J."/>
            <person name="Podtelejnikov A.V."/>
            <person name="Wisniewski J.R."/>
        </authorList>
    </citation>
    <scope>GLYCOSYLATION [LARGE SCALE ANALYSIS] AT ASN-64; ASN-71 AND ASN-98</scope>
    <source>
        <tissue>Plasma</tissue>
    </source>
</reference>
<reference key="8">
    <citation type="journal article" date="2005" name="J. Proteome Res.">
        <title>Human plasma N-glycoproteome analysis by immunoaffinity subtraction, hydrazide chemistry, and mass spectrometry.</title>
        <authorList>
            <person name="Liu T."/>
            <person name="Qian W.-J."/>
            <person name="Gritsenko M.A."/>
            <person name="Camp D.G. II"/>
            <person name="Monroe M.E."/>
            <person name="Moore R.J."/>
            <person name="Smith R.D."/>
        </authorList>
    </citation>
    <scope>GLYCOSYLATION [LARGE SCALE ANALYSIS] AT ASN-64 AND ASN-98</scope>
    <source>
        <tissue>Plasma</tissue>
    </source>
</reference>
<reference key="9">
    <citation type="journal article" date="2009" name="J. Proteome Res.">
        <title>Glycoproteomics analysis of human liver tissue by combination of multiple enzyme digestion and hydrazide chemistry.</title>
        <authorList>
            <person name="Chen R."/>
            <person name="Jiang X."/>
            <person name="Sun D."/>
            <person name="Han G."/>
            <person name="Wang F."/>
            <person name="Ye M."/>
            <person name="Wang L."/>
            <person name="Zou H."/>
        </authorList>
    </citation>
    <scope>GLYCOSYLATION [LARGE SCALE ANALYSIS] AT ASN-98</scope>
    <source>
        <tissue>Liver</tissue>
    </source>
</reference>
<comment type="function">
    <text>Controls the classical pathway of complement activation. It binds as a cofactor to C3b/C4b inactivator (C3bINA), which then hydrolyzes the complement fragment C4b. It also accelerates the degradation of the C4bC2a complex (C3 convertase) by dissociating the complement fragment C2a. It also interacts with anticoagulant protein S and with serum amyloid P component. The beta chain binds protein S.</text>
</comment>
<comment type="subunit">
    <text>Disulfide-linked complex of alpha and beta chains of 3 possible sorts: a 570 kDa complex of 7 alpha chains and 1 beta chain, a 530 kDa homoheptamer of alpha chains or a 500 kDa complex of 6 alpha chains and 1 beta chain. The central body of the alpha chain homomer supports tentacles, each with the binding site for C4b at the end.</text>
</comment>
<comment type="subcellular location">
    <subcellularLocation>
        <location>Secreted</location>
    </subcellularLocation>
</comment>
<comment type="alternative products">
    <event type="alternative splicing"/>
    <isoform>
        <id>P20851-1</id>
        <name>1</name>
        <sequence type="displayed"/>
    </isoform>
    <isoform>
        <id>P20851-2</id>
        <name>2</name>
        <sequence type="described" ref="VSP_022594"/>
    </isoform>
</comment>
<sequence length="252" mass="28357">MFFWCACCLMVAWRVSASDAEHCPELPPVDNSIFVAKEVEGQILGTYVCIKGYHLVGKKTLFCNASKEWDNTTTECRLGHCPDPVLVNGEFSSSGPVNVSDKITFMCNDHYILKGSNRSQCLEDHTWAPPFPICKSRDCDPPGNPVHGYFEGNNFTLGSTISYYCEDRYYLVGVQEQQCVDGEWSSALPVCKLIQEAPKPECEKALLAFQESKNLCEAMENFMQQLKESGMTMEELKYSLELKKAELKAKLL</sequence>
<organism>
    <name type="scientific">Homo sapiens</name>
    <name type="common">Human</name>
    <dbReference type="NCBI Taxonomy" id="9606"/>
    <lineage>
        <taxon>Eukaryota</taxon>
        <taxon>Metazoa</taxon>
        <taxon>Chordata</taxon>
        <taxon>Craniata</taxon>
        <taxon>Vertebrata</taxon>
        <taxon>Euteleostomi</taxon>
        <taxon>Mammalia</taxon>
        <taxon>Eutheria</taxon>
        <taxon>Euarchontoglires</taxon>
        <taxon>Primates</taxon>
        <taxon>Haplorrhini</taxon>
        <taxon>Catarrhini</taxon>
        <taxon>Hominidae</taxon>
        <taxon>Homo</taxon>
    </lineage>
</organism>
<evidence type="ECO:0000255" key="1"/>
<evidence type="ECO:0000255" key="2">
    <source>
        <dbReference type="PROSITE-ProRule" id="PRU00302"/>
    </source>
</evidence>
<evidence type="ECO:0000269" key="3">
    <source>
    </source>
</evidence>
<evidence type="ECO:0000269" key="4">
    <source>
    </source>
</evidence>
<evidence type="ECO:0000269" key="5">
    <source>
    </source>
</evidence>
<evidence type="ECO:0000269" key="6">
    <source ref="3"/>
</evidence>
<evidence type="ECO:0000303" key="7">
    <source>
    </source>
</evidence>
<name>C4BPB_HUMAN</name>
<accession>P20851</accession>
<accession>A5JYP8</accession>
<accession>D3DT81</accession>
<accession>Q5VVR0</accession>
<accession>Q9BS25</accession>
<keyword id="KW-0025">Alternative splicing</keyword>
<keyword id="KW-0180">Complement pathway</keyword>
<keyword id="KW-1015">Disulfide bond</keyword>
<keyword id="KW-0325">Glycoprotein</keyword>
<keyword id="KW-0391">Immunity</keyword>
<keyword id="KW-0399">Innate immunity</keyword>
<keyword id="KW-1267">Proteomics identification</keyword>
<keyword id="KW-1185">Reference proteome</keyword>
<keyword id="KW-0677">Repeat</keyword>
<keyword id="KW-0964">Secreted</keyword>
<keyword id="KW-0732">Signal</keyword>
<keyword id="KW-0768">Sushi</keyword>
<proteinExistence type="evidence at protein level"/>